<protein>
    <recommendedName>
        <fullName evidence="1">S-adenosylmethionine:tRNA ribosyltransferase-isomerase</fullName>
        <ecNumber evidence="1">2.4.99.17</ecNumber>
    </recommendedName>
    <alternativeName>
        <fullName evidence="1">Queuosine biosynthesis protein QueA</fullName>
    </alternativeName>
</protein>
<accession>A2BPN3</accession>
<organism>
    <name type="scientific">Prochlorococcus marinus (strain AS9601)</name>
    <dbReference type="NCBI Taxonomy" id="146891"/>
    <lineage>
        <taxon>Bacteria</taxon>
        <taxon>Bacillati</taxon>
        <taxon>Cyanobacteriota</taxon>
        <taxon>Cyanophyceae</taxon>
        <taxon>Synechococcales</taxon>
        <taxon>Prochlorococcaceae</taxon>
        <taxon>Prochlorococcus</taxon>
    </lineage>
</organism>
<evidence type="ECO:0000255" key="1">
    <source>
        <dbReference type="HAMAP-Rule" id="MF_00113"/>
    </source>
</evidence>
<comment type="function">
    <text evidence="1">Transfers and isomerizes the ribose moiety from AdoMet to the 7-aminomethyl group of 7-deazaguanine (preQ1-tRNA) to give epoxyqueuosine (oQ-tRNA).</text>
</comment>
<comment type="catalytic activity">
    <reaction evidence="1">
        <text>7-aminomethyl-7-carbaguanosine(34) in tRNA + S-adenosyl-L-methionine = epoxyqueuosine(34) in tRNA + adenine + L-methionine + 2 H(+)</text>
        <dbReference type="Rhea" id="RHEA:32155"/>
        <dbReference type="Rhea" id="RHEA-COMP:10342"/>
        <dbReference type="Rhea" id="RHEA-COMP:18582"/>
        <dbReference type="ChEBI" id="CHEBI:15378"/>
        <dbReference type="ChEBI" id="CHEBI:16708"/>
        <dbReference type="ChEBI" id="CHEBI:57844"/>
        <dbReference type="ChEBI" id="CHEBI:59789"/>
        <dbReference type="ChEBI" id="CHEBI:82833"/>
        <dbReference type="ChEBI" id="CHEBI:194443"/>
        <dbReference type="EC" id="2.4.99.17"/>
    </reaction>
</comment>
<comment type="pathway">
    <text evidence="1">tRNA modification; tRNA-queuosine biosynthesis.</text>
</comment>
<comment type="subunit">
    <text evidence="1">Monomer.</text>
</comment>
<comment type="subcellular location">
    <subcellularLocation>
        <location evidence="1">Cytoplasm</location>
    </subcellularLocation>
</comment>
<comment type="similarity">
    <text evidence="1">Belongs to the QueA family.</text>
</comment>
<sequence>MISQINNEERDYKLEAYDYLLDPSLIASKPSAIRHASRLMIVRNSFLEEDCLTNKFTNNLLDEFREGDLVVVNNTKVMKARLKVELENKKLVELLVLERSHECVWLCLAKPAKKLKINRKLKLKSPLEQEINLIVDGVDEETGGRFIKFPENITCLNSMNELLDKYGEIPLPPYIKNSEEDSFHEKSYQTEYATNPGAVAAPTAGLHLSKSLISNLKKKGVIILPITLHVGYGTFKPIDQEDLSNLKLHKEWVSVNKEVVNEIKRIKKTDRKIIAIGTTSVRALESCYSHEINDFIPIAKYVNLVIKPGYKFKVVDGLLTNFHLPKSSLLLLVSAMIGRERLLELYKKAIKEKFRFFSYGDAMYISPDSLLEKK</sequence>
<reference key="1">
    <citation type="journal article" date="2007" name="PLoS Genet.">
        <title>Patterns and implications of gene gain and loss in the evolution of Prochlorococcus.</title>
        <authorList>
            <person name="Kettler G.C."/>
            <person name="Martiny A.C."/>
            <person name="Huang K."/>
            <person name="Zucker J."/>
            <person name="Coleman M.L."/>
            <person name="Rodrigue S."/>
            <person name="Chen F."/>
            <person name="Lapidus A."/>
            <person name="Ferriera S."/>
            <person name="Johnson J."/>
            <person name="Steglich C."/>
            <person name="Church G.M."/>
            <person name="Richardson P."/>
            <person name="Chisholm S.W."/>
        </authorList>
    </citation>
    <scope>NUCLEOTIDE SEQUENCE [LARGE SCALE GENOMIC DNA]</scope>
    <source>
        <strain>AS9601</strain>
    </source>
</reference>
<proteinExistence type="inferred from homology"/>
<name>QUEA_PROMS</name>
<gene>
    <name evidence="1" type="primary">queA</name>
    <name type="ordered locus">A9601_04561</name>
</gene>
<dbReference type="EC" id="2.4.99.17" evidence="1"/>
<dbReference type="EMBL" id="CP000551">
    <property type="protein sequence ID" value="ABM69744.1"/>
    <property type="molecule type" value="Genomic_DNA"/>
</dbReference>
<dbReference type="RefSeq" id="WP_011817916.1">
    <property type="nucleotide sequence ID" value="NC_008816.1"/>
</dbReference>
<dbReference type="SMR" id="A2BPN3"/>
<dbReference type="STRING" id="146891.A9601_04561"/>
<dbReference type="KEGG" id="pmb:A9601_04561"/>
<dbReference type="eggNOG" id="COG0809">
    <property type="taxonomic scope" value="Bacteria"/>
</dbReference>
<dbReference type="HOGENOM" id="CLU_039110_1_0_3"/>
<dbReference type="OrthoDB" id="9805933at2"/>
<dbReference type="UniPathway" id="UPA00392"/>
<dbReference type="Proteomes" id="UP000002590">
    <property type="component" value="Chromosome"/>
</dbReference>
<dbReference type="GO" id="GO:0005737">
    <property type="term" value="C:cytoplasm"/>
    <property type="evidence" value="ECO:0007669"/>
    <property type="project" value="UniProtKB-SubCell"/>
</dbReference>
<dbReference type="GO" id="GO:0051075">
    <property type="term" value="F:S-adenosylmethionine:tRNA ribosyltransferase-isomerase activity"/>
    <property type="evidence" value="ECO:0007669"/>
    <property type="project" value="UniProtKB-EC"/>
</dbReference>
<dbReference type="GO" id="GO:0008616">
    <property type="term" value="P:queuosine biosynthetic process"/>
    <property type="evidence" value="ECO:0007669"/>
    <property type="project" value="UniProtKB-UniRule"/>
</dbReference>
<dbReference type="GO" id="GO:0002099">
    <property type="term" value="P:tRNA wobble guanine modification"/>
    <property type="evidence" value="ECO:0007669"/>
    <property type="project" value="TreeGrafter"/>
</dbReference>
<dbReference type="Gene3D" id="2.40.10.240">
    <property type="entry name" value="QueA-like"/>
    <property type="match status" value="1"/>
</dbReference>
<dbReference type="Gene3D" id="3.40.1780.10">
    <property type="entry name" value="QueA-like"/>
    <property type="match status" value="1"/>
</dbReference>
<dbReference type="HAMAP" id="MF_00113">
    <property type="entry name" value="QueA"/>
    <property type="match status" value="1"/>
</dbReference>
<dbReference type="InterPro" id="IPR003699">
    <property type="entry name" value="QueA"/>
</dbReference>
<dbReference type="InterPro" id="IPR042118">
    <property type="entry name" value="QueA_dom1"/>
</dbReference>
<dbReference type="InterPro" id="IPR042119">
    <property type="entry name" value="QueA_dom2"/>
</dbReference>
<dbReference type="InterPro" id="IPR036100">
    <property type="entry name" value="QueA_sf"/>
</dbReference>
<dbReference type="NCBIfam" id="NF001140">
    <property type="entry name" value="PRK00147.1"/>
    <property type="match status" value="1"/>
</dbReference>
<dbReference type="NCBIfam" id="TIGR00113">
    <property type="entry name" value="queA"/>
    <property type="match status" value="1"/>
</dbReference>
<dbReference type="PANTHER" id="PTHR30307">
    <property type="entry name" value="S-ADENOSYLMETHIONINE:TRNA RIBOSYLTRANSFERASE-ISOMERASE"/>
    <property type="match status" value="1"/>
</dbReference>
<dbReference type="PANTHER" id="PTHR30307:SF0">
    <property type="entry name" value="S-ADENOSYLMETHIONINE:TRNA RIBOSYLTRANSFERASE-ISOMERASE"/>
    <property type="match status" value="1"/>
</dbReference>
<dbReference type="Pfam" id="PF02547">
    <property type="entry name" value="Queuosine_synth"/>
    <property type="match status" value="1"/>
</dbReference>
<dbReference type="SUPFAM" id="SSF111337">
    <property type="entry name" value="QueA-like"/>
    <property type="match status" value="1"/>
</dbReference>
<keyword id="KW-0963">Cytoplasm</keyword>
<keyword id="KW-0671">Queuosine biosynthesis</keyword>
<keyword id="KW-0949">S-adenosyl-L-methionine</keyword>
<keyword id="KW-0808">Transferase</keyword>
<feature type="chain" id="PRO_1000094803" description="S-adenosylmethionine:tRNA ribosyltransferase-isomerase">
    <location>
        <begin position="1"/>
        <end position="374"/>
    </location>
</feature>